<organism>
    <name type="scientific">Rattus norvegicus</name>
    <name type="common">Rat</name>
    <dbReference type="NCBI Taxonomy" id="10116"/>
    <lineage>
        <taxon>Eukaryota</taxon>
        <taxon>Metazoa</taxon>
        <taxon>Chordata</taxon>
        <taxon>Craniata</taxon>
        <taxon>Vertebrata</taxon>
        <taxon>Euteleostomi</taxon>
        <taxon>Mammalia</taxon>
        <taxon>Eutheria</taxon>
        <taxon>Euarchontoglires</taxon>
        <taxon>Glires</taxon>
        <taxon>Rodentia</taxon>
        <taxon>Myomorpha</taxon>
        <taxon>Muroidea</taxon>
        <taxon>Muridae</taxon>
        <taxon>Murinae</taxon>
        <taxon>Rattus</taxon>
    </lineage>
</organism>
<evidence type="ECO:0000250" key="1"/>
<evidence type="ECO:0000255" key="2"/>
<evidence type="ECO:0000255" key="3">
    <source>
        <dbReference type="PROSITE-ProRule" id="PRU00100"/>
    </source>
</evidence>
<evidence type="ECO:0000255" key="4">
    <source>
        <dbReference type="PROSITE-ProRule" id="PRU00143"/>
    </source>
</evidence>
<evidence type="ECO:0000255" key="5">
    <source>
        <dbReference type="PROSITE-ProRule" id="PRU00192"/>
    </source>
</evidence>
<evidence type="ECO:0000269" key="6">
    <source>
    </source>
</evidence>
<evidence type="ECO:0000303" key="7">
    <source>
    </source>
</evidence>
<evidence type="ECO:0000305" key="8"/>
<gene>
    <name type="primary">Mpp4</name>
    <name type="synonym">Dlg6</name>
</gene>
<dbReference type="EMBL" id="AB030499">
    <property type="protein sequence ID" value="BAA88229.1"/>
    <property type="molecule type" value="mRNA"/>
</dbReference>
<dbReference type="EMBL" id="AB030500">
    <property type="protein sequence ID" value="BAA88230.1"/>
    <property type="molecule type" value="mRNA"/>
</dbReference>
<dbReference type="EMBL" id="AB030501">
    <property type="protein sequence ID" value="BAA88231.1"/>
    <property type="molecule type" value="mRNA"/>
</dbReference>
<dbReference type="SMR" id="Q9QYH1"/>
<dbReference type="FunCoup" id="Q9QYH1">
    <property type="interactions" value="52"/>
</dbReference>
<dbReference type="IntAct" id="Q9QYH1">
    <property type="interactions" value="3"/>
</dbReference>
<dbReference type="STRING" id="10116.ENSRNOP00000014094"/>
<dbReference type="PhosphoSitePlus" id="Q9QYH1"/>
<dbReference type="PaxDb" id="10116-ENSRNOP00000014094"/>
<dbReference type="UCSC" id="RGD:620016">
    <molecule id="Q9QYH1-1"/>
    <property type="organism name" value="rat"/>
</dbReference>
<dbReference type="AGR" id="RGD:620016"/>
<dbReference type="RGD" id="620016">
    <property type="gene designation" value="Mpp4"/>
</dbReference>
<dbReference type="eggNOG" id="KOG0609">
    <property type="taxonomic scope" value="Eukaryota"/>
</dbReference>
<dbReference type="InParanoid" id="Q9QYH1"/>
<dbReference type="PRO" id="PR:Q9QYH1"/>
<dbReference type="Proteomes" id="UP000002494">
    <property type="component" value="Unplaced"/>
</dbReference>
<dbReference type="GO" id="GO:0005912">
    <property type="term" value="C:adherens junction"/>
    <property type="evidence" value="ECO:0000266"/>
    <property type="project" value="RGD"/>
</dbReference>
<dbReference type="GO" id="GO:0045178">
    <property type="term" value="C:basal part of cell"/>
    <property type="evidence" value="ECO:0000266"/>
    <property type="project" value="RGD"/>
</dbReference>
<dbReference type="GO" id="GO:0044316">
    <property type="term" value="C:cone cell pedicle"/>
    <property type="evidence" value="ECO:0000266"/>
    <property type="project" value="RGD"/>
</dbReference>
<dbReference type="GO" id="GO:0000139">
    <property type="term" value="C:Golgi membrane"/>
    <property type="evidence" value="ECO:0000266"/>
    <property type="project" value="RGD"/>
</dbReference>
<dbReference type="GO" id="GO:0016328">
    <property type="term" value="C:lateral plasma membrane"/>
    <property type="evidence" value="ECO:0000266"/>
    <property type="project" value="RGD"/>
</dbReference>
<dbReference type="GO" id="GO:0005886">
    <property type="term" value="C:plasma membrane"/>
    <property type="evidence" value="ECO:0000318"/>
    <property type="project" value="GO_Central"/>
</dbReference>
<dbReference type="GO" id="GO:0042734">
    <property type="term" value="C:presynaptic membrane"/>
    <property type="evidence" value="ECO:0000266"/>
    <property type="project" value="RGD"/>
</dbReference>
<dbReference type="GO" id="GO:0032991">
    <property type="term" value="C:protein-containing complex"/>
    <property type="evidence" value="ECO:0000266"/>
    <property type="project" value="RGD"/>
</dbReference>
<dbReference type="GO" id="GO:0044317">
    <property type="term" value="C:rod spherule"/>
    <property type="evidence" value="ECO:0000266"/>
    <property type="project" value="RGD"/>
</dbReference>
<dbReference type="GO" id="GO:0005102">
    <property type="term" value="F:signaling receptor binding"/>
    <property type="evidence" value="ECO:0000353"/>
    <property type="project" value="UniProtKB"/>
</dbReference>
<dbReference type="GO" id="GO:0035418">
    <property type="term" value="P:protein localization to synapse"/>
    <property type="evidence" value="ECO:0000266"/>
    <property type="project" value="RGD"/>
</dbReference>
<dbReference type="CDD" id="cd00071">
    <property type="entry name" value="GMPK"/>
    <property type="match status" value="1"/>
</dbReference>
<dbReference type="CDD" id="cd06799">
    <property type="entry name" value="PDZ_MPP3-MPP4-MPP7-like"/>
    <property type="match status" value="1"/>
</dbReference>
<dbReference type="CDD" id="cd12034">
    <property type="entry name" value="SH3_MPP4"/>
    <property type="match status" value="1"/>
</dbReference>
<dbReference type="FunFam" id="3.30.63.10:FF:000002">
    <property type="entry name" value="Guanylate kinase 1"/>
    <property type="match status" value="1"/>
</dbReference>
<dbReference type="Gene3D" id="2.30.42.10">
    <property type="match status" value="1"/>
</dbReference>
<dbReference type="Gene3D" id="3.40.50.300">
    <property type="entry name" value="P-loop containing nucleotide triphosphate hydrolases"/>
    <property type="match status" value="1"/>
</dbReference>
<dbReference type="Gene3D" id="2.30.30.40">
    <property type="entry name" value="SH3 Domains"/>
    <property type="match status" value="1"/>
</dbReference>
<dbReference type="InterPro" id="IPR008145">
    <property type="entry name" value="GK/Ca_channel_bsu"/>
</dbReference>
<dbReference type="InterPro" id="IPR008144">
    <property type="entry name" value="Guanylate_kin-like_dom"/>
</dbReference>
<dbReference type="InterPro" id="IPR020590">
    <property type="entry name" value="Guanylate_kinase_CS"/>
</dbReference>
<dbReference type="InterPro" id="IPR050716">
    <property type="entry name" value="MAGUK"/>
</dbReference>
<dbReference type="InterPro" id="IPR035600">
    <property type="entry name" value="MPP4_SH3"/>
</dbReference>
<dbReference type="InterPro" id="IPR027417">
    <property type="entry name" value="P-loop_NTPase"/>
</dbReference>
<dbReference type="InterPro" id="IPR001478">
    <property type="entry name" value="PDZ"/>
</dbReference>
<dbReference type="InterPro" id="IPR036034">
    <property type="entry name" value="PDZ_sf"/>
</dbReference>
<dbReference type="InterPro" id="IPR036028">
    <property type="entry name" value="SH3-like_dom_sf"/>
</dbReference>
<dbReference type="InterPro" id="IPR001452">
    <property type="entry name" value="SH3_domain"/>
</dbReference>
<dbReference type="PANTHER" id="PTHR23122">
    <property type="entry name" value="MEMBRANE-ASSOCIATED GUANYLATE KINASE MAGUK"/>
    <property type="match status" value="1"/>
</dbReference>
<dbReference type="Pfam" id="PF00625">
    <property type="entry name" value="Guanylate_kin"/>
    <property type="match status" value="1"/>
</dbReference>
<dbReference type="Pfam" id="PF00595">
    <property type="entry name" value="PDZ"/>
    <property type="match status" value="1"/>
</dbReference>
<dbReference type="SMART" id="SM00072">
    <property type="entry name" value="GuKc"/>
    <property type="match status" value="1"/>
</dbReference>
<dbReference type="SMART" id="SM00228">
    <property type="entry name" value="PDZ"/>
    <property type="match status" value="1"/>
</dbReference>
<dbReference type="SMART" id="SM00326">
    <property type="entry name" value="SH3"/>
    <property type="match status" value="1"/>
</dbReference>
<dbReference type="SUPFAM" id="SSF52540">
    <property type="entry name" value="P-loop containing nucleoside triphosphate hydrolases"/>
    <property type="match status" value="1"/>
</dbReference>
<dbReference type="SUPFAM" id="SSF50156">
    <property type="entry name" value="PDZ domain-like"/>
    <property type="match status" value="1"/>
</dbReference>
<dbReference type="SUPFAM" id="SSF50044">
    <property type="entry name" value="SH3-domain"/>
    <property type="match status" value="1"/>
</dbReference>
<dbReference type="PROSITE" id="PS00856">
    <property type="entry name" value="GUANYLATE_KINASE_1"/>
    <property type="match status" value="1"/>
</dbReference>
<dbReference type="PROSITE" id="PS50052">
    <property type="entry name" value="GUANYLATE_KINASE_2"/>
    <property type="match status" value="1"/>
</dbReference>
<dbReference type="PROSITE" id="PS50106">
    <property type="entry name" value="PDZ"/>
    <property type="match status" value="1"/>
</dbReference>
<dbReference type="PROSITE" id="PS50002">
    <property type="entry name" value="SH3"/>
    <property type="match status" value="1"/>
</dbReference>
<proteinExistence type="evidence at protein level"/>
<feature type="chain" id="PRO_0000094579" description="MAGUK p55 subfamily member 4">
    <location>
        <begin position="1"/>
        <end position="441"/>
    </location>
</feature>
<feature type="domain" description="PDZ" evidence="4">
    <location>
        <begin position="1"/>
        <end position="84"/>
    </location>
</feature>
<feature type="domain" description="SH3" evidence="5">
    <location>
        <begin position="91"/>
        <end position="161"/>
    </location>
</feature>
<feature type="domain" description="Guanylate kinase-like" evidence="3">
    <location>
        <begin position="232"/>
        <end position="421"/>
    </location>
</feature>
<feature type="coiled-coil region" evidence="2">
    <location>
        <begin position="373"/>
        <end position="430"/>
    </location>
</feature>
<feature type="splice variant" id="VSP_014000" description="In isoform 3." evidence="7">
    <location>
        <begin position="181"/>
        <end position="441"/>
    </location>
</feature>
<feature type="splice variant" id="VSP_014001" description="In isoform 2." evidence="7">
    <location>
        <begin position="334"/>
        <end position="351"/>
    </location>
</feature>
<sequence>MRTVCLVKNQQPLGATIKRHEITGDILVARVIHGGLVERNGLLYAGDKLVEVNGVPVEGLDPEQVIHILAMSCGTIMFKVIPVSAPPVSSQTTVYVRAMIDYWPQEDPDIPCMDAGLPFLKGDILQIVDQSDALWWQARKISDIAICAGLIPSNHLLKRKQREFWWSQPYQPHTCLKSTRSKEEFVGDGQQFFIAGFRQQHANMRCTCSCYSAVGAPYEEVVRYQRQPADKHRLIVLVGPSGVGVNELRRQLIGCNPSCFQSAVPHTTRSPKSYEMDGREYHYVSRETFESLMYGHRMLEFGEYKGHLYGTSVNAVLAVLDEGKICVMDLEPQDIQLARTRELKPYVIFIKPPSMSSMRHSRRNAKIITDYFVDMKFKDEDLQEMEELAQKMESQFGQFFDHVIVNDNLQDARAQLLSAIQKAEEELQWVPEAWVSPGAES</sequence>
<protein>
    <recommendedName>
        <fullName>MAGUK p55 subfamily member 4</fullName>
    </recommendedName>
    <alternativeName>
        <fullName>Discs large homolog 6</fullName>
        <shortName>rDLG6</shortName>
    </alternativeName>
</protein>
<comment type="function">
    <text evidence="1">May play a role in retinal photoreceptors development.</text>
</comment>
<comment type="subunit">
    <text evidence="1">Interacts with MPDZ (By similarity). May interact with GRIA2. Forms a complex with CRB1 and PALS1. Interacts with FASLG (By similarity).</text>
</comment>
<comment type="subcellular location">
    <subcellularLocation>
        <location>Cytoplasm</location>
    </subcellularLocation>
    <text evidence="1">Localized at photoreceptor synaptic terminals in retina.</text>
</comment>
<comment type="alternative products">
    <event type="alternative splicing"/>
    <isoform>
        <id>Q9QYH1-1</id>
        <name>1</name>
        <name>Alpha</name>
        <sequence type="displayed"/>
    </isoform>
    <isoform>
        <id>Q9QYH1-2</id>
        <name>2</name>
        <name>Beta</name>
        <sequence type="described" ref="VSP_014001"/>
    </isoform>
    <isoform>
        <id>Q9QYH1-3</id>
        <name>3</name>
        <name>Gamma</name>
        <sequence type="described" ref="VSP_014000"/>
    </isoform>
</comment>
<comment type="tissue specificity">
    <text evidence="6">Highly expressed in brain and detected in lung, and bone (at protein level). Also expressed in intestine and spleen.</text>
</comment>
<comment type="similarity">
    <text evidence="8">Belongs to the MAGUK family.</text>
</comment>
<reference key="1">
    <citation type="journal article" date="1999" name="Biochem. Biophys. Res. Commun.">
        <title>rDLG6: a novel homolog of Drosophila DLG expressed in rat brain.</title>
        <authorList>
            <person name="Inagaki H."/>
            <person name="Maeda S."/>
            <person name="Lin K.H."/>
            <person name="Shimizu N."/>
            <person name="Saito T."/>
        </authorList>
    </citation>
    <scope>NUCLEOTIDE SEQUENCE [MRNA] (ISOFORMS 1; 2 AND 3)</scope>
    <scope>TISSUE SPECIFICITY</scope>
    <scope>INTERACTION WITH GRIA2</scope>
    <source>
        <strain>Sprague-Dawley</strain>
        <tissue>Cerebellum</tissue>
    </source>
</reference>
<keyword id="KW-0025">Alternative splicing</keyword>
<keyword id="KW-0175">Coiled coil</keyword>
<keyword id="KW-0963">Cytoplasm</keyword>
<keyword id="KW-1185">Reference proteome</keyword>
<keyword id="KW-0728">SH3 domain</keyword>
<name>MPP4_RAT</name>
<accession>Q9QYH1</accession>
<accession>Q9QYG9</accession>
<accession>Q9QYH0</accession>